<feature type="chain" id="PRO_0000105156" description="Glutamyl-tRNA(Gln) amidotransferase subunit A 2">
    <location>
        <begin position="1"/>
        <end position="478"/>
    </location>
</feature>
<feature type="active site" description="Charge relay system" evidence="1">
    <location>
        <position position="79"/>
    </location>
</feature>
<feature type="active site" description="Charge relay system" evidence="1">
    <location>
        <position position="154"/>
    </location>
</feature>
<feature type="active site" description="Acyl-ester intermediate" evidence="1">
    <location>
        <position position="178"/>
    </location>
</feature>
<evidence type="ECO:0000250" key="1"/>
<evidence type="ECO:0000305" key="2"/>
<dbReference type="EC" id="6.3.5.7"/>
<dbReference type="EMBL" id="AE001437">
    <property type="protein sequence ID" value="AAK80919.1"/>
    <property type="molecule type" value="Genomic_DNA"/>
</dbReference>
<dbReference type="PIR" id="D97266">
    <property type="entry name" value="D97266"/>
</dbReference>
<dbReference type="RefSeq" id="NP_349579.1">
    <property type="nucleotide sequence ID" value="NC_003030.1"/>
</dbReference>
<dbReference type="SMR" id="Q97EX8"/>
<dbReference type="STRING" id="272562.CA_C2977"/>
<dbReference type="KEGG" id="cac:CA_C2977"/>
<dbReference type="PATRIC" id="fig|272562.8.peg.3162"/>
<dbReference type="eggNOG" id="COG0154">
    <property type="taxonomic scope" value="Bacteria"/>
</dbReference>
<dbReference type="HOGENOM" id="CLU_009600_0_3_9"/>
<dbReference type="OrthoDB" id="9811471at2"/>
<dbReference type="Proteomes" id="UP000000814">
    <property type="component" value="Chromosome"/>
</dbReference>
<dbReference type="GO" id="GO:0030956">
    <property type="term" value="C:glutamyl-tRNA(Gln) amidotransferase complex"/>
    <property type="evidence" value="ECO:0007669"/>
    <property type="project" value="InterPro"/>
</dbReference>
<dbReference type="GO" id="GO:0005524">
    <property type="term" value="F:ATP binding"/>
    <property type="evidence" value="ECO:0007669"/>
    <property type="project" value="UniProtKB-KW"/>
</dbReference>
<dbReference type="GO" id="GO:0050567">
    <property type="term" value="F:glutaminyl-tRNA synthase (glutamine-hydrolyzing) activity"/>
    <property type="evidence" value="ECO:0007669"/>
    <property type="project" value="UniProtKB-UniRule"/>
</dbReference>
<dbReference type="GO" id="GO:0006412">
    <property type="term" value="P:translation"/>
    <property type="evidence" value="ECO:0007669"/>
    <property type="project" value="UniProtKB-UniRule"/>
</dbReference>
<dbReference type="Gene3D" id="3.90.1300.10">
    <property type="entry name" value="Amidase signature (AS) domain"/>
    <property type="match status" value="1"/>
</dbReference>
<dbReference type="HAMAP" id="MF_00120">
    <property type="entry name" value="GatA"/>
    <property type="match status" value="1"/>
</dbReference>
<dbReference type="InterPro" id="IPR000120">
    <property type="entry name" value="Amidase"/>
</dbReference>
<dbReference type="InterPro" id="IPR020556">
    <property type="entry name" value="Amidase_CS"/>
</dbReference>
<dbReference type="InterPro" id="IPR023631">
    <property type="entry name" value="Amidase_dom"/>
</dbReference>
<dbReference type="InterPro" id="IPR036928">
    <property type="entry name" value="AS_sf"/>
</dbReference>
<dbReference type="InterPro" id="IPR004412">
    <property type="entry name" value="GatA"/>
</dbReference>
<dbReference type="NCBIfam" id="TIGR00132">
    <property type="entry name" value="gatA"/>
    <property type="match status" value="1"/>
</dbReference>
<dbReference type="PANTHER" id="PTHR11895:SF151">
    <property type="entry name" value="GLUTAMYL-TRNA(GLN) AMIDOTRANSFERASE SUBUNIT A"/>
    <property type="match status" value="1"/>
</dbReference>
<dbReference type="PANTHER" id="PTHR11895">
    <property type="entry name" value="TRANSAMIDASE"/>
    <property type="match status" value="1"/>
</dbReference>
<dbReference type="Pfam" id="PF01425">
    <property type="entry name" value="Amidase"/>
    <property type="match status" value="1"/>
</dbReference>
<dbReference type="SUPFAM" id="SSF75304">
    <property type="entry name" value="Amidase signature (AS) enzymes"/>
    <property type="match status" value="1"/>
</dbReference>
<dbReference type="PROSITE" id="PS00571">
    <property type="entry name" value="AMIDASES"/>
    <property type="match status" value="1"/>
</dbReference>
<gene>
    <name type="primary">gatA2</name>
    <name type="ordered locus">CA_C2977</name>
</gene>
<name>GATA2_CLOAB</name>
<sequence length="478" mass="52481">MEILDMTVEQLRNAILDKHLKSEDIVKAYFDNIKRNEPEINAYITLCEDYALKEAKDVDKKIANGDKVGRLAGIPIAIKDNICTDGIKTTCASKMLYDFVPPYDATVIKKLKAEDAIIIGKVNMDEFAMGSSTENSAFKITKNPRDITRVPGGSSGGSAAVVAAKMAPISLGSDTGGSIRQPAAFCGVVGLKPTYGLVSRFGLIAFASSLDQIGPLGKTVKDCAELLEVISGEDELDNTSSKKHEKEDYLEGIDDGIKGMKIGMPKEFLNDGLDPEIRKCIDDTIEKLKSLGAEVCEMSLPITEEGLSAYYIISSAEASSNLARFDGIRYGYRPDDFEDVYDLMETSRSEAFGDEVKRRIMLGTYALSSGYYDAYYKRALKLKKKIKNEFKEAFENYDLILSPVSPVLPFKIGEKKADPLQMYLADIYTVNINLAGIPAISLPCSVSKEGLPIGLQLLGPHFGEKKIFRAARALEKER</sequence>
<keyword id="KW-0067">ATP-binding</keyword>
<keyword id="KW-0436">Ligase</keyword>
<keyword id="KW-0547">Nucleotide-binding</keyword>
<keyword id="KW-0648">Protein biosynthesis</keyword>
<keyword id="KW-1185">Reference proteome</keyword>
<organism>
    <name type="scientific">Clostridium acetobutylicum (strain ATCC 824 / DSM 792 / JCM 1419 / IAM 19013 / LMG 5710 / NBRC 13948 / NRRL B-527 / VKM B-1787 / 2291 / W)</name>
    <dbReference type="NCBI Taxonomy" id="272562"/>
    <lineage>
        <taxon>Bacteria</taxon>
        <taxon>Bacillati</taxon>
        <taxon>Bacillota</taxon>
        <taxon>Clostridia</taxon>
        <taxon>Eubacteriales</taxon>
        <taxon>Clostridiaceae</taxon>
        <taxon>Clostridium</taxon>
    </lineage>
</organism>
<protein>
    <recommendedName>
        <fullName>Glutamyl-tRNA(Gln) amidotransferase subunit A 2</fullName>
        <shortName>Glu-ADT subunit A 2</shortName>
        <ecNumber>6.3.5.7</ecNumber>
    </recommendedName>
</protein>
<reference key="1">
    <citation type="journal article" date="2001" name="J. Bacteriol.">
        <title>Genome sequence and comparative analysis of the solvent-producing bacterium Clostridium acetobutylicum.</title>
        <authorList>
            <person name="Noelling J."/>
            <person name="Breton G."/>
            <person name="Omelchenko M.V."/>
            <person name="Makarova K.S."/>
            <person name="Zeng Q."/>
            <person name="Gibson R."/>
            <person name="Lee H.M."/>
            <person name="Dubois J."/>
            <person name="Qiu D."/>
            <person name="Hitti J."/>
            <person name="Wolf Y.I."/>
            <person name="Tatusov R.L."/>
            <person name="Sabathe F."/>
            <person name="Doucette-Stamm L.A."/>
            <person name="Soucaille P."/>
            <person name="Daly M.J."/>
            <person name="Bennett G.N."/>
            <person name="Koonin E.V."/>
            <person name="Smith D.R."/>
        </authorList>
    </citation>
    <scope>NUCLEOTIDE SEQUENCE [LARGE SCALE GENOMIC DNA]</scope>
    <source>
        <strain>ATCC 824 / DSM 792 / JCM 1419 / IAM 19013 / LMG 5710 / NBRC 13948 / NRRL B-527 / VKM B-1787 / 2291 / W</strain>
    </source>
</reference>
<comment type="function">
    <text evidence="1">Allows the formation of correctly charged Gln-tRNA(Gln) through the transamidation of misacylated Glu-tRNA(Gln) in organisms which lack glutaminyl-tRNA synthetase. The reaction takes place in the presence of glutamine and ATP through an activated gamma-phospho-Glu-tRNA(Gln) (By similarity).</text>
</comment>
<comment type="catalytic activity">
    <reaction>
        <text>L-glutamyl-tRNA(Gln) + L-glutamine + ATP + H2O = L-glutaminyl-tRNA(Gln) + L-glutamate + ADP + phosphate + H(+)</text>
        <dbReference type="Rhea" id="RHEA:17521"/>
        <dbReference type="Rhea" id="RHEA-COMP:9681"/>
        <dbReference type="Rhea" id="RHEA-COMP:9684"/>
        <dbReference type="ChEBI" id="CHEBI:15377"/>
        <dbReference type="ChEBI" id="CHEBI:15378"/>
        <dbReference type="ChEBI" id="CHEBI:29985"/>
        <dbReference type="ChEBI" id="CHEBI:30616"/>
        <dbReference type="ChEBI" id="CHEBI:43474"/>
        <dbReference type="ChEBI" id="CHEBI:58359"/>
        <dbReference type="ChEBI" id="CHEBI:78520"/>
        <dbReference type="ChEBI" id="CHEBI:78521"/>
        <dbReference type="ChEBI" id="CHEBI:456216"/>
        <dbReference type="EC" id="6.3.5.7"/>
    </reaction>
</comment>
<comment type="subunit">
    <text evidence="1">Heterotrimer of A, B and C subunits.</text>
</comment>
<comment type="similarity">
    <text evidence="2">Belongs to the amidase family. GatA subfamily.</text>
</comment>
<proteinExistence type="inferred from homology"/>
<accession>Q97EX8</accession>